<evidence type="ECO:0000255" key="1">
    <source>
        <dbReference type="HAMAP-Rule" id="MF_01377"/>
    </source>
</evidence>
<reference key="1">
    <citation type="journal article" date="2005" name="Nucleic Acids Res.">
        <title>Genome dynamics and diversity of Shigella species, the etiologic agents of bacillary dysentery.</title>
        <authorList>
            <person name="Yang F."/>
            <person name="Yang J."/>
            <person name="Zhang X."/>
            <person name="Chen L."/>
            <person name="Jiang Y."/>
            <person name="Yan Y."/>
            <person name="Tang X."/>
            <person name="Wang J."/>
            <person name="Xiong Z."/>
            <person name="Dong J."/>
            <person name="Xue Y."/>
            <person name="Zhu Y."/>
            <person name="Xu X."/>
            <person name="Sun L."/>
            <person name="Chen S."/>
            <person name="Nie H."/>
            <person name="Peng J."/>
            <person name="Xu J."/>
            <person name="Wang Y."/>
            <person name="Yuan Z."/>
            <person name="Wen Y."/>
            <person name="Yao Z."/>
            <person name="Shen Y."/>
            <person name="Qiang B."/>
            <person name="Hou Y."/>
            <person name="Yu J."/>
            <person name="Jin Q."/>
        </authorList>
    </citation>
    <scope>NUCLEOTIDE SEQUENCE [LARGE SCALE GENOMIC DNA]</scope>
    <source>
        <strain>Sd197</strain>
    </source>
</reference>
<sequence length="299" mass="31974">MAEFPASLLILNGKSTDNLPLREAIMLLREEGMTIHVRVTWEKGDAARYVEEARKLGVATVIAGGGDGTINEVSTALIQCEGDDIPALGILPLGTANDFATSVGIPEALDKALKLAIAGNAIAIDMAQVNKQTCFINMATGGFGTRITTETPEKLKAALGGVSYIIHGLMRMDTLQPDRCEIRGENFHWQGDGLVIGIGNGRQAGGGQQLCPNALINDGLLQLRIFTGDEILPALVSTLKSDEDNPNIIEGASSWFDIQAPHEITFNLDGEPLSGQNFHIEILPAALRCRLPPDCPLLR</sequence>
<name>YEGS_SHIDS</name>
<accession>Q32EB4</accession>
<comment type="function">
    <text evidence="1">Probably phosphorylates lipids; the in vivo substrate is unknown.</text>
</comment>
<comment type="cofactor">
    <cofactor evidence="1">
        <name>Mg(2+)</name>
        <dbReference type="ChEBI" id="CHEBI:18420"/>
    </cofactor>
    <cofactor evidence="1">
        <name>Ca(2+)</name>
        <dbReference type="ChEBI" id="CHEBI:29108"/>
    </cofactor>
    <text evidence="1">Binds 1 Mg(2+) ion per subunit. Ca(2+) may be able to substitute.</text>
</comment>
<comment type="subcellular location">
    <subcellularLocation>
        <location evidence="1">Cytoplasm</location>
    </subcellularLocation>
</comment>
<comment type="similarity">
    <text evidence="1">Belongs to the diacylglycerol/lipid kinase family. YegS lipid kinase subfamily.</text>
</comment>
<organism>
    <name type="scientific">Shigella dysenteriae serotype 1 (strain Sd197)</name>
    <dbReference type="NCBI Taxonomy" id="300267"/>
    <lineage>
        <taxon>Bacteria</taxon>
        <taxon>Pseudomonadati</taxon>
        <taxon>Pseudomonadota</taxon>
        <taxon>Gammaproteobacteria</taxon>
        <taxon>Enterobacterales</taxon>
        <taxon>Enterobacteriaceae</taxon>
        <taxon>Shigella</taxon>
    </lineage>
</organism>
<feature type="chain" id="PRO_0000292159" description="Probable lipid kinase YegS">
    <location>
        <begin position="1"/>
        <end position="299"/>
    </location>
</feature>
<feature type="domain" description="DAGKc" evidence="1">
    <location>
        <begin position="2"/>
        <end position="133"/>
    </location>
</feature>
<feature type="active site" description="Proton acceptor" evidence="1">
    <location>
        <position position="271"/>
    </location>
</feature>
<feature type="binding site" evidence="1">
    <location>
        <position position="40"/>
    </location>
    <ligand>
        <name>ATP</name>
        <dbReference type="ChEBI" id="CHEBI:30616"/>
    </ligand>
</feature>
<feature type="binding site" evidence="1">
    <location>
        <begin position="66"/>
        <end position="72"/>
    </location>
    <ligand>
        <name>ATP</name>
        <dbReference type="ChEBI" id="CHEBI:30616"/>
    </ligand>
</feature>
<feature type="binding site" evidence="1">
    <location>
        <position position="95"/>
    </location>
    <ligand>
        <name>ATP</name>
        <dbReference type="ChEBI" id="CHEBI:30616"/>
    </ligand>
</feature>
<feature type="binding site" evidence="1">
    <location>
        <position position="215"/>
    </location>
    <ligand>
        <name>Mg(2+)</name>
        <dbReference type="ChEBI" id="CHEBI:18420"/>
    </ligand>
</feature>
<feature type="binding site" evidence="1">
    <location>
        <position position="218"/>
    </location>
    <ligand>
        <name>Mg(2+)</name>
        <dbReference type="ChEBI" id="CHEBI:18420"/>
    </ligand>
</feature>
<feature type="binding site" evidence="1">
    <location>
        <position position="220"/>
    </location>
    <ligand>
        <name>Mg(2+)</name>
        <dbReference type="ChEBI" id="CHEBI:18420"/>
    </ligand>
</feature>
<gene>
    <name evidence="1" type="primary">yegS</name>
    <name type="ordered locus">SDY_2261</name>
</gene>
<keyword id="KW-0067">ATP-binding</keyword>
<keyword id="KW-0963">Cytoplasm</keyword>
<keyword id="KW-0418">Kinase</keyword>
<keyword id="KW-0444">Lipid biosynthesis</keyword>
<keyword id="KW-0443">Lipid metabolism</keyword>
<keyword id="KW-0460">Magnesium</keyword>
<keyword id="KW-0479">Metal-binding</keyword>
<keyword id="KW-0547">Nucleotide-binding</keyword>
<keyword id="KW-0594">Phospholipid biosynthesis</keyword>
<keyword id="KW-1208">Phospholipid metabolism</keyword>
<keyword id="KW-1185">Reference proteome</keyword>
<keyword id="KW-0808">Transferase</keyword>
<dbReference type="EC" id="2.7.1.-" evidence="1"/>
<dbReference type="EMBL" id="CP000034">
    <property type="protein sequence ID" value="ABB62341.1"/>
    <property type="molecule type" value="Genomic_DNA"/>
</dbReference>
<dbReference type="RefSeq" id="WP_000807364.1">
    <property type="nucleotide sequence ID" value="NC_007606.1"/>
</dbReference>
<dbReference type="RefSeq" id="YP_403832.1">
    <property type="nucleotide sequence ID" value="NC_007606.1"/>
</dbReference>
<dbReference type="SMR" id="Q32EB4"/>
<dbReference type="STRING" id="300267.SDY_2261"/>
<dbReference type="EnsemblBacteria" id="ABB62341">
    <property type="protein sequence ID" value="ABB62341"/>
    <property type="gene ID" value="SDY_2261"/>
</dbReference>
<dbReference type="KEGG" id="sdy:SDY_2261"/>
<dbReference type="PATRIC" id="fig|300267.13.peg.2730"/>
<dbReference type="HOGENOM" id="CLU_045532_1_1_6"/>
<dbReference type="Proteomes" id="UP000002716">
    <property type="component" value="Chromosome"/>
</dbReference>
<dbReference type="GO" id="GO:0005737">
    <property type="term" value="C:cytoplasm"/>
    <property type="evidence" value="ECO:0007669"/>
    <property type="project" value="UniProtKB-SubCell"/>
</dbReference>
<dbReference type="GO" id="GO:0005886">
    <property type="term" value="C:plasma membrane"/>
    <property type="evidence" value="ECO:0007669"/>
    <property type="project" value="TreeGrafter"/>
</dbReference>
<dbReference type="GO" id="GO:0005524">
    <property type="term" value="F:ATP binding"/>
    <property type="evidence" value="ECO:0007669"/>
    <property type="project" value="UniProtKB-UniRule"/>
</dbReference>
<dbReference type="GO" id="GO:0001727">
    <property type="term" value="F:lipid kinase activity"/>
    <property type="evidence" value="ECO:0007669"/>
    <property type="project" value="UniProtKB-UniRule"/>
</dbReference>
<dbReference type="GO" id="GO:0000287">
    <property type="term" value="F:magnesium ion binding"/>
    <property type="evidence" value="ECO:0007669"/>
    <property type="project" value="UniProtKB-UniRule"/>
</dbReference>
<dbReference type="GO" id="GO:0008654">
    <property type="term" value="P:phospholipid biosynthetic process"/>
    <property type="evidence" value="ECO:0007669"/>
    <property type="project" value="UniProtKB-UniRule"/>
</dbReference>
<dbReference type="FunFam" id="2.60.200.40:FF:000008">
    <property type="entry name" value="Probable lipid kinase YegS"/>
    <property type="match status" value="1"/>
</dbReference>
<dbReference type="FunFam" id="3.40.50.10330:FF:000008">
    <property type="entry name" value="Probable lipid kinase YegS"/>
    <property type="match status" value="1"/>
</dbReference>
<dbReference type="Gene3D" id="2.60.200.40">
    <property type="match status" value="1"/>
</dbReference>
<dbReference type="Gene3D" id="3.40.50.10330">
    <property type="entry name" value="Probable inorganic polyphosphate/atp-NAD kinase, domain 1"/>
    <property type="match status" value="1"/>
</dbReference>
<dbReference type="HAMAP" id="MF_01377">
    <property type="entry name" value="YegS"/>
    <property type="match status" value="1"/>
</dbReference>
<dbReference type="InterPro" id="IPR017438">
    <property type="entry name" value="ATP-NAD_kinase_N"/>
</dbReference>
<dbReference type="InterPro" id="IPR005218">
    <property type="entry name" value="Diacylglycerol/lipid_kinase"/>
</dbReference>
<dbReference type="InterPro" id="IPR001206">
    <property type="entry name" value="Diacylglycerol_kinase_cat_dom"/>
</dbReference>
<dbReference type="InterPro" id="IPR022433">
    <property type="entry name" value="Lip_kinase_YegS"/>
</dbReference>
<dbReference type="InterPro" id="IPR050187">
    <property type="entry name" value="Lipid_Phosphate_FormReg"/>
</dbReference>
<dbReference type="InterPro" id="IPR016064">
    <property type="entry name" value="NAD/diacylglycerol_kinase_sf"/>
</dbReference>
<dbReference type="InterPro" id="IPR045540">
    <property type="entry name" value="YegS/DAGK_C"/>
</dbReference>
<dbReference type="NCBIfam" id="TIGR03702">
    <property type="entry name" value="lip_kinase_YegS"/>
    <property type="match status" value="1"/>
</dbReference>
<dbReference type="NCBIfam" id="NF009602">
    <property type="entry name" value="PRK13054.1"/>
    <property type="match status" value="1"/>
</dbReference>
<dbReference type="NCBIfam" id="TIGR00147">
    <property type="entry name" value="YegS/Rv2252/BmrU family lipid kinase"/>
    <property type="match status" value="1"/>
</dbReference>
<dbReference type="PANTHER" id="PTHR12358:SF106">
    <property type="entry name" value="LIPID KINASE YEGS"/>
    <property type="match status" value="1"/>
</dbReference>
<dbReference type="PANTHER" id="PTHR12358">
    <property type="entry name" value="SPHINGOSINE KINASE"/>
    <property type="match status" value="1"/>
</dbReference>
<dbReference type="Pfam" id="PF00781">
    <property type="entry name" value="DAGK_cat"/>
    <property type="match status" value="1"/>
</dbReference>
<dbReference type="Pfam" id="PF19279">
    <property type="entry name" value="YegS_C"/>
    <property type="match status" value="1"/>
</dbReference>
<dbReference type="SMART" id="SM00046">
    <property type="entry name" value="DAGKc"/>
    <property type="match status" value="1"/>
</dbReference>
<dbReference type="SUPFAM" id="SSF111331">
    <property type="entry name" value="NAD kinase/diacylglycerol kinase-like"/>
    <property type="match status" value="1"/>
</dbReference>
<dbReference type="PROSITE" id="PS50146">
    <property type="entry name" value="DAGK"/>
    <property type="match status" value="1"/>
</dbReference>
<proteinExistence type="inferred from homology"/>
<protein>
    <recommendedName>
        <fullName evidence="1">Probable lipid kinase YegS</fullName>
        <ecNumber evidence="1">2.7.1.-</ecNumber>
    </recommendedName>
</protein>